<feature type="chain" id="PRO_0000079522" description="Cilia- and flagella-associated protein 298">
    <location>
        <begin position="1"/>
        <end position="291"/>
    </location>
</feature>
<protein>
    <recommendedName>
        <fullName evidence="1">Cilia- and flagella-associated protein 298</fullName>
    </recommendedName>
</protein>
<gene>
    <name type="ORF">CG18675</name>
</gene>
<proteinExistence type="evidence at transcript level"/>
<accession>Q9VZH1</accession>
<accession>Q8T478</accession>
<keyword id="KW-1185">Reference proteome</keyword>
<organism>
    <name type="scientific">Drosophila melanogaster</name>
    <name type="common">Fruit fly</name>
    <dbReference type="NCBI Taxonomy" id="7227"/>
    <lineage>
        <taxon>Eukaryota</taxon>
        <taxon>Metazoa</taxon>
        <taxon>Ecdysozoa</taxon>
        <taxon>Arthropoda</taxon>
        <taxon>Hexapoda</taxon>
        <taxon>Insecta</taxon>
        <taxon>Pterygota</taxon>
        <taxon>Neoptera</taxon>
        <taxon>Endopterygota</taxon>
        <taxon>Diptera</taxon>
        <taxon>Brachycera</taxon>
        <taxon>Muscomorpha</taxon>
        <taxon>Ephydroidea</taxon>
        <taxon>Drosophilidae</taxon>
        <taxon>Drosophila</taxon>
        <taxon>Sophophora</taxon>
    </lineage>
</organism>
<evidence type="ECO:0000305" key="1"/>
<sequence length="291" mass="33117">MVLLQVKRGDELIFLYETSVKEKTDTVLRELVALHNGQLKIQRVCMEIEELAEHGTMVPPEMIGLNEEQREELKLKDVWADKCIPSGGFTINKDPLLRRNGQQPTEAMQKVLAGAMNDAKAMVDRRLAKSSKTLTPKIVEEALNLLRGGVTIVYPMQLPPHDSIRMEFTNTEDLTGTQASKEVIEPSKAQFWFAGHQMLMGKLMSDYLGHNDKTKVVVKLNQIGEGPPGREAVISDPLRRQMMAEAYRRQEELKKLEQDDDDEYLNSSWADSGSLKRQAHGLENVRFRFRK</sequence>
<reference key="1">
    <citation type="journal article" date="2000" name="Science">
        <title>The genome sequence of Drosophila melanogaster.</title>
        <authorList>
            <person name="Adams M.D."/>
            <person name="Celniker S.E."/>
            <person name="Holt R.A."/>
            <person name="Evans C.A."/>
            <person name="Gocayne J.D."/>
            <person name="Amanatides P.G."/>
            <person name="Scherer S.E."/>
            <person name="Li P.W."/>
            <person name="Hoskins R.A."/>
            <person name="Galle R.F."/>
            <person name="George R.A."/>
            <person name="Lewis S.E."/>
            <person name="Richards S."/>
            <person name="Ashburner M."/>
            <person name="Henderson S.N."/>
            <person name="Sutton G.G."/>
            <person name="Wortman J.R."/>
            <person name="Yandell M.D."/>
            <person name="Zhang Q."/>
            <person name="Chen L.X."/>
            <person name="Brandon R.C."/>
            <person name="Rogers Y.-H.C."/>
            <person name="Blazej R.G."/>
            <person name="Champe M."/>
            <person name="Pfeiffer B.D."/>
            <person name="Wan K.H."/>
            <person name="Doyle C."/>
            <person name="Baxter E.G."/>
            <person name="Helt G."/>
            <person name="Nelson C.R."/>
            <person name="Miklos G.L.G."/>
            <person name="Abril J.F."/>
            <person name="Agbayani A."/>
            <person name="An H.-J."/>
            <person name="Andrews-Pfannkoch C."/>
            <person name="Baldwin D."/>
            <person name="Ballew R.M."/>
            <person name="Basu A."/>
            <person name="Baxendale J."/>
            <person name="Bayraktaroglu L."/>
            <person name="Beasley E.M."/>
            <person name="Beeson K.Y."/>
            <person name="Benos P.V."/>
            <person name="Berman B.P."/>
            <person name="Bhandari D."/>
            <person name="Bolshakov S."/>
            <person name="Borkova D."/>
            <person name="Botchan M.R."/>
            <person name="Bouck J."/>
            <person name="Brokstein P."/>
            <person name="Brottier P."/>
            <person name="Burtis K.C."/>
            <person name="Busam D.A."/>
            <person name="Butler H."/>
            <person name="Cadieu E."/>
            <person name="Center A."/>
            <person name="Chandra I."/>
            <person name="Cherry J.M."/>
            <person name="Cawley S."/>
            <person name="Dahlke C."/>
            <person name="Davenport L.B."/>
            <person name="Davies P."/>
            <person name="de Pablos B."/>
            <person name="Delcher A."/>
            <person name="Deng Z."/>
            <person name="Mays A.D."/>
            <person name="Dew I."/>
            <person name="Dietz S.M."/>
            <person name="Dodson K."/>
            <person name="Doup L.E."/>
            <person name="Downes M."/>
            <person name="Dugan-Rocha S."/>
            <person name="Dunkov B.C."/>
            <person name="Dunn P."/>
            <person name="Durbin K.J."/>
            <person name="Evangelista C.C."/>
            <person name="Ferraz C."/>
            <person name="Ferriera S."/>
            <person name="Fleischmann W."/>
            <person name="Fosler C."/>
            <person name="Gabrielian A.E."/>
            <person name="Garg N.S."/>
            <person name="Gelbart W.M."/>
            <person name="Glasser K."/>
            <person name="Glodek A."/>
            <person name="Gong F."/>
            <person name="Gorrell J.H."/>
            <person name="Gu Z."/>
            <person name="Guan P."/>
            <person name="Harris M."/>
            <person name="Harris N.L."/>
            <person name="Harvey D.A."/>
            <person name="Heiman T.J."/>
            <person name="Hernandez J.R."/>
            <person name="Houck J."/>
            <person name="Hostin D."/>
            <person name="Houston K.A."/>
            <person name="Howland T.J."/>
            <person name="Wei M.-H."/>
            <person name="Ibegwam C."/>
            <person name="Jalali M."/>
            <person name="Kalush F."/>
            <person name="Karpen G.H."/>
            <person name="Ke Z."/>
            <person name="Kennison J.A."/>
            <person name="Ketchum K.A."/>
            <person name="Kimmel B.E."/>
            <person name="Kodira C.D."/>
            <person name="Kraft C.L."/>
            <person name="Kravitz S."/>
            <person name="Kulp D."/>
            <person name="Lai Z."/>
            <person name="Lasko P."/>
            <person name="Lei Y."/>
            <person name="Levitsky A.A."/>
            <person name="Li J.H."/>
            <person name="Li Z."/>
            <person name="Liang Y."/>
            <person name="Lin X."/>
            <person name="Liu X."/>
            <person name="Mattei B."/>
            <person name="McIntosh T.C."/>
            <person name="McLeod M.P."/>
            <person name="McPherson D."/>
            <person name="Merkulov G."/>
            <person name="Milshina N.V."/>
            <person name="Mobarry C."/>
            <person name="Morris J."/>
            <person name="Moshrefi A."/>
            <person name="Mount S.M."/>
            <person name="Moy M."/>
            <person name="Murphy B."/>
            <person name="Murphy L."/>
            <person name="Muzny D.M."/>
            <person name="Nelson D.L."/>
            <person name="Nelson D.R."/>
            <person name="Nelson K.A."/>
            <person name="Nixon K."/>
            <person name="Nusskern D.R."/>
            <person name="Pacleb J.M."/>
            <person name="Palazzolo M."/>
            <person name="Pittman G.S."/>
            <person name="Pan S."/>
            <person name="Pollard J."/>
            <person name="Puri V."/>
            <person name="Reese M.G."/>
            <person name="Reinert K."/>
            <person name="Remington K."/>
            <person name="Saunders R.D.C."/>
            <person name="Scheeler F."/>
            <person name="Shen H."/>
            <person name="Shue B.C."/>
            <person name="Siden-Kiamos I."/>
            <person name="Simpson M."/>
            <person name="Skupski M.P."/>
            <person name="Smith T.J."/>
            <person name="Spier E."/>
            <person name="Spradling A.C."/>
            <person name="Stapleton M."/>
            <person name="Strong R."/>
            <person name="Sun E."/>
            <person name="Svirskas R."/>
            <person name="Tector C."/>
            <person name="Turner R."/>
            <person name="Venter E."/>
            <person name="Wang A.H."/>
            <person name="Wang X."/>
            <person name="Wang Z.-Y."/>
            <person name="Wassarman D.A."/>
            <person name="Weinstock G.M."/>
            <person name="Weissenbach J."/>
            <person name="Williams S.M."/>
            <person name="Woodage T."/>
            <person name="Worley K.C."/>
            <person name="Wu D."/>
            <person name="Yang S."/>
            <person name="Yao Q.A."/>
            <person name="Ye J."/>
            <person name="Yeh R.-F."/>
            <person name="Zaveri J.S."/>
            <person name="Zhan M."/>
            <person name="Zhang G."/>
            <person name="Zhao Q."/>
            <person name="Zheng L."/>
            <person name="Zheng X.H."/>
            <person name="Zhong F.N."/>
            <person name="Zhong W."/>
            <person name="Zhou X."/>
            <person name="Zhu S.C."/>
            <person name="Zhu X."/>
            <person name="Smith H.O."/>
            <person name="Gibbs R.A."/>
            <person name="Myers E.W."/>
            <person name="Rubin G.M."/>
            <person name="Venter J.C."/>
        </authorList>
    </citation>
    <scope>NUCLEOTIDE SEQUENCE [LARGE SCALE GENOMIC DNA]</scope>
    <source>
        <strain>Berkeley</strain>
    </source>
</reference>
<reference key="2">
    <citation type="journal article" date="2002" name="Genome Biol.">
        <title>Annotation of the Drosophila melanogaster euchromatic genome: a systematic review.</title>
        <authorList>
            <person name="Misra S."/>
            <person name="Crosby M.A."/>
            <person name="Mungall C.J."/>
            <person name="Matthews B.B."/>
            <person name="Campbell K.S."/>
            <person name="Hradecky P."/>
            <person name="Huang Y."/>
            <person name="Kaminker J.S."/>
            <person name="Millburn G.H."/>
            <person name="Prochnik S.E."/>
            <person name="Smith C.D."/>
            <person name="Tupy J.L."/>
            <person name="Whitfield E.J."/>
            <person name="Bayraktaroglu L."/>
            <person name="Berman B.P."/>
            <person name="Bettencourt B.R."/>
            <person name="Celniker S.E."/>
            <person name="de Grey A.D.N.J."/>
            <person name="Drysdale R.A."/>
            <person name="Harris N.L."/>
            <person name="Richter J."/>
            <person name="Russo S."/>
            <person name="Schroeder A.J."/>
            <person name="Shu S.Q."/>
            <person name="Stapleton M."/>
            <person name="Yamada C."/>
            <person name="Ashburner M."/>
            <person name="Gelbart W.M."/>
            <person name="Rubin G.M."/>
            <person name="Lewis S.E."/>
        </authorList>
    </citation>
    <scope>GENOME REANNOTATION</scope>
    <source>
        <strain>Berkeley</strain>
    </source>
</reference>
<reference key="3">
    <citation type="journal article" date="2002" name="Genome Biol.">
        <title>A Drosophila full-length cDNA resource.</title>
        <authorList>
            <person name="Stapleton M."/>
            <person name="Carlson J.W."/>
            <person name="Brokstein P."/>
            <person name="Yu C."/>
            <person name="Champe M."/>
            <person name="George R.A."/>
            <person name="Guarin H."/>
            <person name="Kronmiller B."/>
            <person name="Pacleb J.M."/>
            <person name="Park S."/>
            <person name="Wan K.H."/>
            <person name="Rubin G.M."/>
            <person name="Celniker S.E."/>
        </authorList>
    </citation>
    <scope>NUCLEOTIDE SEQUENCE [LARGE SCALE MRNA]</scope>
    <source>
        <strain>Berkeley</strain>
        <tissue>Testis</tissue>
    </source>
</reference>
<comment type="similarity">
    <text evidence="1">Belongs to the CFAP298 family.</text>
</comment>
<name>CF298_DROME</name>
<dbReference type="EMBL" id="AE014296">
    <property type="protein sequence ID" value="AAF47852.3"/>
    <property type="molecule type" value="Genomic_DNA"/>
</dbReference>
<dbReference type="EMBL" id="AY089317">
    <property type="protein sequence ID" value="AAL90055.1"/>
    <property type="molecule type" value="mRNA"/>
</dbReference>
<dbReference type="RefSeq" id="NP_652334.2">
    <property type="nucleotide sequence ID" value="NM_144077.3"/>
</dbReference>
<dbReference type="BioGRID" id="72572">
    <property type="interactions" value="2"/>
</dbReference>
<dbReference type="DIP" id="DIP-22376N"/>
<dbReference type="FunCoup" id="Q9VZH1">
    <property type="interactions" value="33"/>
</dbReference>
<dbReference type="IntAct" id="Q9VZH1">
    <property type="interactions" value="10"/>
</dbReference>
<dbReference type="STRING" id="7227.FBpp0073074"/>
<dbReference type="PaxDb" id="7227-FBpp0073074"/>
<dbReference type="DNASU" id="50169"/>
<dbReference type="EnsemblMetazoa" id="FBtr0073218">
    <property type="protein sequence ID" value="FBpp0073074"/>
    <property type="gene ID" value="FBgn0040696"/>
</dbReference>
<dbReference type="GeneID" id="50169"/>
<dbReference type="KEGG" id="dme:Dmel_CG18675"/>
<dbReference type="UCSC" id="CG18675-RA">
    <property type="organism name" value="d. melanogaster"/>
</dbReference>
<dbReference type="AGR" id="FB:FBgn0040696"/>
<dbReference type="FlyBase" id="FBgn0040696">
    <property type="gene designation" value="CG18675"/>
</dbReference>
<dbReference type="VEuPathDB" id="VectorBase:FBgn0040696"/>
<dbReference type="eggNOG" id="ENOG502QQ3Z">
    <property type="taxonomic scope" value="Eukaryota"/>
</dbReference>
<dbReference type="GeneTree" id="ENSGT00390000006278"/>
<dbReference type="HOGENOM" id="CLU_064854_0_0_1"/>
<dbReference type="InParanoid" id="Q9VZH1"/>
<dbReference type="OMA" id="YRKQEEW"/>
<dbReference type="OrthoDB" id="276065at2759"/>
<dbReference type="PhylomeDB" id="Q9VZH1"/>
<dbReference type="BioGRID-ORCS" id="50169">
    <property type="hits" value="0 hits in 3 CRISPR screens"/>
</dbReference>
<dbReference type="ChiTaRS" id="CG18675">
    <property type="organism name" value="fly"/>
</dbReference>
<dbReference type="GenomeRNAi" id="50169"/>
<dbReference type="PRO" id="PR:Q9VZH1"/>
<dbReference type="Proteomes" id="UP000000803">
    <property type="component" value="Chromosome 3L"/>
</dbReference>
<dbReference type="Bgee" id="FBgn0040696">
    <property type="expression patterns" value="Expressed in embryonic labial sensory complex (Drosophila) and 20 other cell types or tissues"/>
</dbReference>
<dbReference type="GO" id="GO:0003352">
    <property type="term" value="P:regulation of cilium movement"/>
    <property type="evidence" value="ECO:0007669"/>
    <property type="project" value="InterPro"/>
</dbReference>
<dbReference type="InterPro" id="IPR021298">
    <property type="entry name" value="CFAP298"/>
</dbReference>
<dbReference type="PANTHER" id="PTHR13238:SF0">
    <property type="entry name" value="CILIA- AND FLAGELLA-ASSOCIATED PROTEIN 298"/>
    <property type="match status" value="1"/>
</dbReference>
<dbReference type="PANTHER" id="PTHR13238">
    <property type="entry name" value="PROTEIN C21ORF59"/>
    <property type="match status" value="1"/>
</dbReference>
<dbReference type="Pfam" id="PF11069">
    <property type="entry name" value="CFAP298"/>
    <property type="match status" value="1"/>
</dbReference>